<organism>
    <name type="scientific">Burkholderia cenocepacia (strain ATCC BAA-245 / DSM 16553 / LMG 16656 / NCTC 13227 / J2315 / CF5610)</name>
    <name type="common">Burkholderia cepacia (strain J2315)</name>
    <dbReference type="NCBI Taxonomy" id="216591"/>
    <lineage>
        <taxon>Bacteria</taxon>
        <taxon>Pseudomonadati</taxon>
        <taxon>Pseudomonadota</taxon>
        <taxon>Betaproteobacteria</taxon>
        <taxon>Burkholderiales</taxon>
        <taxon>Burkholderiaceae</taxon>
        <taxon>Burkholderia</taxon>
        <taxon>Burkholderia cepacia complex</taxon>
    </lineage>
</organism>
<accession>B4EBJ2</accession>
<keyword id="KW-0067">ATP-binding</keyword>
<keyword id="KW-0418">Kinase</keyword>
<keyword id="KW-0545">Nucleotide biosynthesis</keyword>
<keyword id="KW-0547">Nucleotide-binding</keyword>
<keyword id="KW-0808">Transferase</keyword>
<sequence length="206" mass="23042">MASGKFITFEGIDGAGKTTHLAWFCERLQGRLAAAGRQVVVTREPGGTQLGEKLREILLNQPMDLETEALLMFAARREHLALVIEPALARGDWVVSDRFTDATFAYQGGGRGLPRDKLETLERWVQGGFQPDLTVLFDVAPQVASERRGAARMPDKFESESDAFFSRTRAEYLRRAEEAPHRFAIVDATRSIPEIRQQLERVLAAL</sequence>
<dbReference type="EC" id="2.7.4.9" evidence="1"/>
<dbReference type="EMBL" id="AM747720">
    <property type="protein sequence ID" value="CAR52265.1"/>
    <property type="molecule type" value="Genomic_DNA"/>
</dbReference>
<dbReference type="RefSeq" id="WP_006483888.1">
    <property type="nucleotide sequence ID" value="NC_011000.1"/>
</dbReference>
<dbReference type="SMR" id="B4EBJ2"/>
<dbReference type="GeneID" id="56558444"/>
<dbReference type="KEGG" id="bcj:BCAL1964"/>
<dbReference type="eggNOG" id="COG0125">
    <property type="taxonomic scope" value="Bacteria"/>
</dbReference>
<dbReference type="HOGENOM" id="CLU_049131_0_2_4"/>
<dbReference type="BioCyc" id="BCEN216591:G1G1V-2158-MONOMER"/>
<dbReference type="Proteomes" id="UP000001035">
    <property type="component" value="Chromosome 1"/>
</dbReference>
<dbReference type="GO" id="GO:0005829">
    <property type="term" value="C:cytosol"/>
    <property type="evidence" value="ECO:0007669"/>
    <property type="project" value="TreeGrafter"/>
</dbReference>
<dbReference type="GO" id="GO:0005524">
    <property type="term" value="F:ATP binding"/>
    <property type="evidence" value="ECO:0007669"/>
    <property type="project" value="UniProtKB-UniRule"/>
</dbReference>
<dbReference type="GO" id="GO:0004798">
    <property type="term" value="F:dTMP kinase activity"/>
    <property type="evidence" value="ECO:0007669"/>
    <property type="project" value="UniProtKB-UniRule"/>
</dbReference>
<dbReference type="GO" id="GO:0006233">
    <property type="term" value="P:dTDP biosynthetic process"/>
    <property type="evidence" value="ECO:0007669"/>
    <property type="project" value="InterPro"/>
</dbReference>
<dbReference type="GO" id="GO:0006235">
    <property type="term" value="P:dTTP biosynthetic process"/>
    <property type="evidence" value="ECO:0007669"/>
    <property type="project" value="UniProtKB-UniRule"/>
</dbReference>
<dbReference type="GO" id="GO:0006227">
    <property type="term" value="P:dUDP biosynthetic process"/>
    <property type="evidence" value="ECO:0007669"/>
    <property type="project" value="TreeGrafter"/>
</dbReference>
<dbReference type="CDD" id="cd01672">
    <property type="entry name" value="TMPK"/>
    <property type="match status" value="1"/>
</dbReference>
<dbReference type="FunFam" id="3.40.50.300:FF:000225">
    <property type="entry name" value="Thymidylate kinase"/>
    <property type="match status" value="1"/>
</dbReference>
<dbReference type="Gene3D" id="3.40.50.300">
    <property type="entry name" value="P-loop containing nucleotide triphosphate hydrolases"/>
    <property type="match status" value="1"/>
</dbReference>
<dbReference type="HAMAP" id="MF_00165">
    <property type="entry name" value="Thymidylate_kinase"/>
    <property type="match status" value="1"/>
</dbReference>
<dbReference type="InterPro" id="IPR027417">
    <property type="entry name" value="P-loop_NTPase"/>
</dbReference>
<dbReference type="InterPro" id="IPR039430">
    <property type="entry name" value="Thymidylate_kin-like_dom"/>
</dbReference>
<dbReference type="InterPro" id="IPR018094">
    <property type="entry name" value="Thymidylate_kinase"/>
</dbReference>
<dbReference type="NCBIfam" id="TIGR00041">
    <property type="entry name" value="DTMP_kinase"/>
    <property type="match status" value="1"/>
</dbReference>
<dbReference type="PANTHER" id="PTHR10344">
    <property type="entry name" value="THYMIDYLATE KINASE"/>
    <property type="match status" value="1"/>
</dbReference>
<dbReference type="PANTHER" id="PTHR10344:SF4">
    <property type="entry name" value="UMP-CMP KINASE 2, MITOCHONDRIAL"/>
    <property type="match status" value="1"/>
</dbReference>
<dbReference type="Pfam" id="PF02223">
    <property type="entry name" value="Thymidylate_kin"/>
    <property type="match status" value="1"/>
</dbReference>
<dbReference type="SUPFAM" id="SSF52540">
    <property type="entry name" value="P-loop containing nucleoside triphosphate hydrolases"/>
    <property type="match status" value="1"/>
</dbReference>
<comment type="function">
    <text evidence="1">Phosphorylation of dTMP to form dTDP in both de novo and salvage pathways of dTTP synthesis.</text>
</comment>
<comment type="catalytic activity">
    <reaction evidence="1">
        <text>dTMP + ATP = dTDP + ADP</text>
        <dbReference type="Rhea" id="RHEA:13517"/>
        <dbReference type="ChEBI" id="CHEBI:30616"/>
        <dbReference type="ChEBI" id="CHEBI:58369"/>
        <dbReference type="ChEBI" id="CHEBI:63528"/>
        <dbReference type="ChEBI" id="CHEBI:456216"/>
        <dbReference type="EC" id="2.7.4.9"/>
    </reaction>
</comment>
<comment type="similarity">
    <text evidence="1">Belongs to the thymidylate kinase family.</text>
</comment>
<proteinExistence type="inferred from homology"/>
<gene>
    <name evidence="1" type="primary">tmk</name>
    <name type="ordered locus">BceJ2315_19280</name>
    <name type="ORF">BCAL1964</name>
</gene>
<reference key="1">
    <citation type="journal article" date="2009" name="J. Bacteriol.">
        <title>The genome of Burkholderia cenocepacia J2315, an epidemic pathogen of cystic fibrosis patients.</title>
        <authorList>
            <person name="Holden M.T."/>
            <person name="Seth-Smith H.M."/>
            <person name="Crossman L.C."/>
            <person name="Sebaihia M."/>
            <person name="Bentley S.D."/>
            <person name="Cerdeno-Tarraga A.M."/>
            <person name="Thomson N.R."/>
            <person name="Bason N."/>
            <person name="Quail M.A."/>
            <person name="Sharp S."/>
            <person name="Cherevach I."/>
            <person name="Churcher C."/>
            <person name="Goodhead I."/>
            <person name="Hauser H."/>
            <person name="Holroyd N."/>
            <person name="Mungall K."/>
            <person name="Scott P."/>
            <person name="Walker D."/>
            <person name="White B."/>
            <person name="Rose H."/>
            <person name="Iversen P."/>
            <person name="Mil-Homens D."/>
            <person name="Rocha E.P."/>
            <person name="Fialho A.M."/>
            <person name="Baldwin A."/>
            <person name="Dowson C."/>
            <person name="Barrell B.G."/>
            <person name="Govan J.R."/>
            <person name="Vandamme P."/>
            <person name="Hart C.A."/>
            <person name="Mahenthiralingam E."/>
            <person name="Parkhill J."/>
        </authorList>
    </citation>
    <scope>NUCLEOTIDE SEQUENCE [LARGE SCALE GENOMIC DNA]</scope>
    <source>
        <strain>ATCC BAA-245 / DSM 16553 / LMG 16656 / NCTC 13227 / J2315 / CF5610</strain>
    </source>
</reference>
<feature type="chain" id="PRO_1000097381" description="Thymidylate kinase">
    <location>
        <begin position="1"/>
        <end position="206"/>
    </location>
</feature>
<feature type="binding site" evidence="1">
    <location>
        <begin position="11"/>
        <end position="18"/>
    </location>
    <ligand>
        <name>ATP</name>
        <dbReference type="ChEBI" id="CHEBI:30616"/>
    </ligand>
</feature>
<name>KTHY_BURCJ</name>
<protein>
    <recommendedName>
        <fullName evidence="1">Thymidylate kinase</fullName>
        <ecNumber evidence="1">2.7.4.9</ecNumber>
    </recommendedName>
    <alternativeName>
        <fullName evidence="1">dTMP kinase</fullName>
    </alternativeName>
</protein>
<evidence type="ECO:0000255" key="1">
    <source>
        <dbReference type="HAMAP-Rule" id="MF_00165"/>
    </source>
</evidence>